<evidence type="ECO:0000255" key="1">
    <source>
        <dbReference type="HAMAP-Rule" id="MF_00003"/>
    </source>
</evidence>
<comment type="function">
    <text evidence="1">One of several proteins that assist in the late maturation steps of the functional core of the 30S ribosomal subunit. Associates with free 30S ribosomal subunits (but not with 30S subunits that are part of 70S ribosomes or polysomes). Required for efficient processing of 16S rRNA. May interact with the 5'-terminal helix region of 16S rRNA.</text>
</comment>
<comment type="subunit">
    <text evidence="1">Monomer. Binds 30S ribosomal subunits, but not 50S ribosomal subunits or 70S ribosomes.</text>
</comment>
<comment type="subcellular location">
    <subcellularLocation>
        <location evidence="1">Cytoplasm</location>
    </subcellularLocation>
</comment>
<comment type="similarity">
    <text evidence="1">Belongs to the RbfA family.</text>
</comment>
<organism>
    <name type="scientific">Campylobacter jejuni subsp. jejuni serotype O:2 (strain ATCC 700819 / NCTC 11168)</name>
    <dbReference type="NCBI Taxonomy" id="192222"/>
    <lineage>
        <taxon>Bacteria</taxon>
        <taxon>Pseudomonadati</taxon>
        <taxon>Campylobacterota</taxon>
        <taxon>Epsilonproteobacteria</taxon>
        <taxon>Campylobacterales</taxon>
        <taxon>Campylobacteraceae</taxon>
        <taxon>Campylobacter</taxon>
    </lineage>
</organism>
<keyword id="KW-0963">Cytoplasm</keyword>
<keyword id="KW-1185">Reference proteome</keyword>
<keyword id="KW-0690">Ribosome biogenesis</keyword>
<protein>
    <recommendedName>
        <fullName evidence="1">Ribosome-binding factor A</fullName>
    </recommendedName>
</protein>
<dbReference type="EMBL" id="AL111168">
    <property type="protein sequence ID" value="CAL34308.1"/>
    <property type="molecule type" value="Genomic_DNA"/>
</dbReference>
<dbReference type="PIR" id="A81431">
    <property type="entry name" value="A81431"/>
</dbReference>
<dbReference type="RefSeq" id="WP_002778650.1">
    <property type="nucleotide sequence ID" value="NZ_SZUC01000005.1"/>
</dbReference>
<dbReference type="RefSeq" id="YP_002343597.1">
    <property type="nucleotide sequence ID" value="NC_002163.1"/>
</dbReference>
<dbReference type="SMR" id="Q9PIZ0"/>
<dbReference type="IntAct" id="Q9PIZ0">
    <property type="interactions" value="1"/>
</dbReference>
<dbReference type="STRING" id="192222.Cj0137"/>
<dbReference type="PaxDb" id="192222-Cj0137"/>
<dbReference type="EnsemblBacteria" id="CAL34308">
    <property type="protein sequence ID" value="CAL34308"/>
    <property type="gene ID" value="Cj0137"/>
</dbReference>
<dbReference type="GeneID" id="66544860"/>
<dbReference type="GeneID" id="904468"/>
<dbReference type="KEGG" id="cje:Cj0137"/>
<dbReference type="PATRIC" id="fig|192222.6.peg.135"/>
<dbReference type="eggNOG" id="COG0858">
    <property type="taxonomic scope" value="Bacteria"/>
</dbReference>
<dbReference type="HOGENOM" id="CLU_089475_6_5_7"/>
<dbReference type="OrthoDB" id="5339518at2"/>
<dbReference type="PRO" id="PR:Q9PIZ0"/>
<dbReference type="Proteomes" id="UP000000799">
    <property type="component" value="Chromosome"/>
</dbReference>
<dbReference type="GO" id="GO:0005737">
    <property type="term" value="C:cytoplasm"/>
    <property type="evidence" value="ECO:0007669"/>
    <property type="project" value="UniProtKB-SubCell"/>
</dbReference>
<dbReference type="GO" id="GO:0030490">
    <property type="term" value="P:maturation of SSU-rRNA"/>
    <property type="evidence" value="ECO:0007669"/>
    <property type="project" value="UniProtKB-UniRule"/>
</dbReference>
<dbReference type="Gene3D" id="3.30.300.20">
    <property type="match status" value="1"/>
</dbReference>
<dbReference type="HAMAP" id="MF_00003">
    <property type="entry name" value="RbfA"/>
    <property type="match status" value="1"/>
</dbReference>
<dbReference type="InterPro" id="IPR015946">
    <property type="entry name" value="KH_dom-like_a/b"/>
</dbReference>
<dbReference type="InterPro" id="IPR000238">
    <property type="entry name" value="RbfA"/>
</dbReference>
<dbReference type="InterPro" id="IPR023799">
    <property type="entry name" value="RbfA_dom_sf"/>
</dbReference>
<dbReference type="InterPro" id="IPR020053">
    <property type="entry name" value="Ribosome-bd_factorA_CS"/>
</dbReference>
<dbReference type="NCBIfam" id="NF001805">
    <property type="entry name" value="PRK00521.3-3"/>
    <property type="match status" value="1"/>
</dbReference>
<dbReference type="NCBIfam" id="NF001806">
    <property type="entry name" value="PRK00521.3-4"/>
    <property type="match status" value="1"/>
</dbReference>
<dbReference type="NCBIfam" id="TIGR00082">
    <property type="entry name" value="rbfA"/>
    <property type="match status" value="1"/>
</dbReference>
<dbReference type="Pfam" id="PF02033">
    <property type="entry name" value="RBFA"/>
    <property type="match status" value="1"/>
</dbReference>
<dbReference type="SUPFAM" id="SSF89919">
    <property type="entry name" value="Ribosome-binding factor A, RbfA"/>
    <property type="match status" value="1"/>
</dbReference>
<dbReference type="PROSITE" id="PS01319">
    <property type="entry name" value="RBFA"/>
    <property type="match status" value="1"/>
</dbReference>
<name>RBFA_CAMJE</name>
<proteinExistence type="inferred from homology"/>
<sequence>MNPSEIKKLRTESILKELIPEALANLDDENLKNLCVVDVECKKGRYDAFVYLDKMFFNVHEQEKILSSLKKASRALQNYCMSEQGWYRCPNFHFKFDDRLEYQNHMDALFEKIKKDKNES</sequence>
<gene>
    <name evidence="1" type="primary">rbfA</name>
    <name type="ordered locus">Cj0137</name>
</gene>
<accession>Q9PIZ0</accession>
<accession>Q0PC00</accession>
<reference key="1">
    <citation type="journal article" date="2000" name="Nature">
        <title>The genome sequence of the food-borne pathogen Campylobacter jejuni reveals hypervariable sequences.</title>
        <authorList>
            <person name="Parkhill J."/>
            <person name="Wren B.W."/>
            <person name="Mungall K.L."/>
            <person name="Ketley J.M."/>
            <person name="Churcher C.M."/>
            <person name="Basham D."/>
            <person name="Chillingworth T."/>
            <person name="Davies R.M."/>
            <person name="Feltwell T."/>
            <person name="Holroyd S."/>
            <person name="Jagels K."/>
            <person name="Karlyshev A.V."/>
            <person name="Moule S."/>
            <person name="Pallen M.J."/>
            <person name="Penn C.W."/>
            <person name="Quail M.A."/>
            <person name="Rajandream M.A."/>
            <person name="Rutherford K.M."/>
            <person name="van Vliet A.H.M."/>
            <person name="Whitehead S."/>
            <person name="Barrell B.G."/>
        </authorList>
    </citation>
    <scope>NUCLEOTIDE SEQUENCE [LARGE SCALE GENOMIC DNA]</scope>
    <source>
        <strain>ATCC 700819 / NCTC 11168</strain>
    </source>
</reference>
<feature type="chain" id="PRO_0000102639" description="Ribosome-binding factor A">
    <location>
        <begin position="1"/>
        <end position="120"/>
    </location>
</feature>